<dbReference type="EC" id="4.2.1.20" evidence="1"/>
<dbReference type="EMBL" id="CP001600">
    <property type="protein sequence ID" value="ACR68869.1"/>
    <property type="molecule type" value="Genomic_DNA"/>
</dbReference>
<dbReference type="RefSeq" id="WP_015871025.1">
    <property type="nucleotide sequence ID" value="NZ_CP169062.1"/>
</dbReference>
<dbReference type="SMR" id="C5BDB7"/>
<dbReference type="STRING" id="67780.B6E78_01630"/>
<dbReference type="GeneID" id="69538666"/>
<dbReference type="KEGG" id="eic:NT01EI_1688"/>
<dbReference type="PATRIC" id="fig|634503.3.peg.1515"/>
<dbReference type="HOGENOM" id="CLU_016734_3_1_6"/>
<dbReference type="OrthoDB" id="9766131at2"/>
<dbReference type="UniPathway" id="UPA00035">
    <property type="reaction ID" value="UER00044"/>
</dbReference>
<dbReference type="Proteomes" id="UP000001485">
    <property type="component" value="Chromosome"/>
</dbReference>
<dbReference type="GO" id="GO:0005737">
    <property type="term" value="C:cytoplasm"/>
    <property type="evidence" value="ECO:0007669"/>
    <property type="project" value="TreeGrafter"/>
</dbReference>
<dbReference type="GO" id="GO:0004834">
    <property type="term" value="F:tryptophan synthase activity"/>
    <property type="evidence" value="ECO:0007669"/>
    <property type="project" value="UniProtKB-UniRule"/>
</dbReference>
<dbReference type="CDD" id="cd06446">
    <property type="entry name" value="Trp-synth_B"/>
    <property type="match status" value="1"/>
</dbReference>
<dbReference type="FunFam" id="3.40.50.1100:FF:000001">
    <property type="entry name" value="Tryptophan synthase beta chain"/>
    <property type="match status" value="1"/>
</dbReference>
<dbReference type="FunFam" id="3.40.50.1100:FF:000004">
    <property type="entry name" value="Tryptophan synthase beta chain"/>
    <property type="match status" value="1"/>
</dbReference>
<dbReference type="Gene3D" id="3.40.50.1100">
    <property type="match status" value="2"/>
</dbReference>
<dbReference type="HAMAP" id="MF_00133">
    <property type="entry name" value="Trp_synth_beta"/>
    <property type="match status" value="1"/>
</dbReference>
<dbReference type="InterPro" id="IPR006653">
    <property type="entry name" value="Trp_synth_b_CS"/>
</dbReference>
<dbReference type="InterPro" id="IPR006654">
    <property type="entry name" value="Trp_synth_beta"/>
</dbReference>
<dbReference type="InterPro" id="IPR023026">
    <property type="entry name" value="Trp_synth_beta/beta-like"/>
</dbReference>
<dbReference type="InterPro" id="IPR001926">
    <property type="entry name" value="TrpB-like_PALP"/>
</dbReference>
<dbReference type="InterPro" id="IPR036052">
    <property type="entry name" value="TrpB-like_PALP_sf"/>
</dbReference>
<dbReference type="NCBIfam" id="TIGR00263">
    <property type="entry name" value="trpB"/>
    <property type="match status" value="1"/>
</dbReference>
<dbReference type="PANTHER" id="PTHR48077:SF3">
    <property type="entry name" value="TRYPTOPHAN SYNTHASE"/>
    <property type="match status" value="1"/>
</dbReference>
<dbReference type="PANTHER" id="PTHR48077">
    <property type="entry name" value="TRYPTOPHAN SYNTHASE-RELATED"/>
    <property type="match status" value="1"/>
</dbReference>
<dbReference type="Pfam" id="PF00291">
    <property type="entry name" value="PALP"/>
    <property type="match status" value="1"/>
</dbReference>
<dbReference type="PIRSF" id="PIRSF001413">
    <property type="entry name" value="Trp_syn_beta"/>
    <property type="match status" value="1"/>
</dbReference>
<dbReference type="SUPFAM" id="SSF53686">
    <property type="entry name" value="Tryptophan synthase beta subunit-like PLP-dependent enzymes"/>
    <property type="match status" value="1"/>
</dbReference>
<dbReference type="PROSITE" id="PS00168">
    <property type="entry name" value="TRP_SYNTHASE_BETA"/>
    <property type="match status" value="1"/>
</dbReference>
<comment type="function">
    <text evidence="1">The beta subunit is responsible for the synthesis of L-tryptophan from indole and L-serine.</text>
</comment>
<comment type="catalytic activity">
    <reaction evidence="1">
        <text>(1S,2R)-1-C-(indol-3-yl)glycerol 3-phosphate + L-serine = D-glyceraldehyde 3-phosphate + L-tryptophan + H2O</text>
        <dbReference type="Rhea" id="RHEA:10532"/>
        <dbReference type="ChEBI" id="CHEBI:15377"/>
        <dbReference type="ChEBI" id="CHEBI:33384"/>
        <dbReference type="ChEBI" id="CHEBI:57912"/>
        <dbReference type="ChEBI" id="CHEBI:58866"/>
        <dbReference type="ChEBI" id="CHEBI:59776"/>
        <dbReference type="EC" id="4.2.1.20"/>
    </reaction>
</comment>
<comment type="cofactor">
    <cofactor evidence="1">
        <name>pyridoxal 5'-phosphate</name>
        <dbReference type="ChEBI" id="CHEBI:597326"/>
    </cofactor>
</comment>
<comment type="pathway">
    <text evidence="1">Amino-acid biosynthesis; L-tryptophan biosynthesis; L-tryptophan from chorismate: step 5/5.</text>
</comment>
<comment type="subunit">
    <text evidence="1">Tetramer of two alpha and two beta chains.</text>
</comment>
<comment type="similarity">
    <text evidence="1">Belongs to the TrpB family.</text>
</comment>
<sequence length="397" mass="42897">MSLLNPYFGEFGGRFVPQILIPALNQLEAAFVDARDDPTFQTQFNDLLHNYAGRPTALTLCRNLTAGTRTRLYLKREDLLHGGAHKTNQVLGQALLARRMGKTEIIAETGAGQHGVATALACALLGLKCRVYMGAKDVARQSPNVFRMRLMGAEVIPVHSGSATLKDACNEALRDWSANYDQAHYLLGTAAGPHPYPTIVREFQRMIGAETRRQILQAEGRLPDAVLACVGGGSNAIGMFADFIDDASVQLIGVEPAGLGIETGQHGAPLSHGRVGIYFGMRSPMMQTAEGQIEESYSLSAGLDFPSVGPQHAHLNSIGRADYVSATDDEALAAFMQLSRQEGIIPALESAHALAHALKLIHQQPEKEQLLVVNLSGRGDKDIFTVHDILQSRGEIQ</sequence>
<organism>
    <name type="scientific">Edwardsiella ictaluri (strain 93-146)</name>
    <dbReference type="NCBI Taxonomy" id="634503"/>
    <lineage>
        <taxon>Bacteria</taxon>
        <taxon>Pseudomonadati</taxon>
        <taxon>Pseudomonadota</taxon>
        <taxon>Gammaproteobacteria</taxon>
        <taxon>Enterobacterales</taxon>
        <taxon>Hafniaceae</taxon>
        <taxon>Edwardsiella</taxon>
    </lineage>
</organism>
<proteinExistence type="inferred from homology"/>
<keyword id="KW-0028">Amino-acid biosynthesis</keyword>
<keyword id="KW-0057">Aromatic amino acid biosynthesis</keyword>
<keyword id="KW-0456">Lyase</keyword>
<keyword id="KW-0663">Pyridoxal phosphate</keyword>
<keyword id="KW-0822">Tryptophan biosynthesis</keyword>
<reference key="1">
    <citation type="submission" date="2009-03" db="EMBL/GenBank/DDBJ databases">
        <title>Complete genome sequence of Edwardsiella ictaluri 93-146.</title>
        <authorList>
            <person name="Williams M.L."/>
            <person name="Gillaspy A.F."/>
            <person name="Dyer D.W."/>
            <person name="Thune R.L."/>
            <person name="Waldbieser G.C."/>
            <person name="Schuster S.C."/>
            <person name="Gipson J."/>
            <person name="Zaitshik J."/>
            <person name="Landry C."/>
            <person name="Lawrence M.L."/>
        </authorList>
    </citation>
    <scope>NUCLEOTIDE SEQUENCE [LARGE SCALE GENOMIC DNA]</scope>
    <source>
        <strain>93-146</strain>
    </source>
</reference>
<accession>C5BDB7</accession>
<gene>
    <name evidence="1" type="primary">trpB</name>
    <name type="ordered locus">NT01EI_1688</name>
</gene>
<protein>
    <recommendedName>
        <fullName evidence="1">Tryptophan synthase beta chain</fullName>
        <ecNumber evidence="1">4.2.1.20</ecNumber>
    </recommendedName>
</protein>
<evidence type="ECO:0000255" key="1">
    <source>
        <dbReference type="HAMAP-Rule" id="MF_00133"/>
    </source>
</evidence>
<feature type="chain" id="PRO_1000203192" description="Tryptophan synthase beta chain">
    <location>
        <begin position="1"/>
        <end position="397"/>
    </location>
</feature>
<feature type="modified residue" description="N6-(pyridoxal phosphate)lysine" evidence="1">
    <location>
        <position position="86"/>
    </location>
</feature>
<name>TRPB_EDWI9</name>